<protein>
    <recommendedName>
        <fullName evidence="1">Error-prone DNA polymerase</fullName>
        <ecNumber evidence="1">2.7.7.7</ecNumber>
    </recommendedName>
</protein>
<keyword id="KW-0963">Cytoplasm</keyword>
<keyword id="KW-0227">DNA damage</keyword>
<keyword id="KW-0234">DNA repair</keyword>
<keyword id="KW-0235">DNA replication</keyword>
<keyword id="KW-0239">DNA-directed DNA polymerase</keyword>
<keyword id="KW-0548">Nucleotidyltransferase</keyword>
<keyword id="KW-1185">Reference proteome</keyword>
<keyword id="KW-0808">Transferase</keyword>
<sequence>MQYTQLQTLTNYSFLKSASHPQELVEEAKILGYHALAITDECSLAGIVKAHVAAKELNLKLLVGSYFELTNGFKIIAIAPNRQAYAELSGFISLARRRASKGEYEAHLSDLRFRLQQCLIIWLPYFNNHISDVDVTTLATAFKQRLWIGVSHTLIAAEQRLFSHLNKLANALHVPLVASGLTYMHNKNCKPLLDILTAIRENTPIQQLGTRLHSNAEVNLKPLHELNQLYPEALIQQTQVIAQLCNFSLDELRYQYPKELVPSNTTPIAHLKKLVKEGEAKRWPQGTPEHAQKIIAMELGLIEEMQYEYYFLTVHDIVHFARSKNILCQGRGSAANSVVCYCLFITEIAPGQINVLFERFISKERNEPPDIDVDFEHQRREEVIQYIYQKYGRERAALAATVITYRSRSAIRDVGKAMGLEAGLVGQLAKSLAWWDRTGDLIKRMESFGLNPETQKTMQHFFALVQQILGFPRHLSQHVGGFIITQDKVSDLVPLENASMPDRTIIQWDKYDIEAMGLLKVDVLALGMLTALRKSLETVSQYDAAVYSLATIPREDPATYAMLSKGDSIGVFQVESRAQMSMLPRLRPKCFYDLVIEIAIVRPGPIQGDMVHPYLRRRDGIEEVHYQNDKIKSVLEPTLGIPIFQEQAIRLAMVAADFSGGEADQLRRAMASWGKNGSLLKFEDKFIQGMLNNGYPLDFAHRLFEQIKGFGGYGFPESHSASFALLCYASSWLKCHHPAAFYCALLNSQPMGFYSASQLIQDARRHKVVVLPVEVNASGYESHVVLTNHNTSAPPNIIQLGLHMIKGLSILTAERIVLAKGDKPFTTLKELSLRAQLSSADLQLLASADALHKLTGNRHNSRWQAAALMPHSPLLDGAELEEDALNTPAPSIEKNIQTDFNSTGLSLRLHPMALLRAQQPFNRCKKQSELASIHNGGFAQVAGLVTGRQRPGTAKGTLFLTLEDETGNINIVVWTSTQERCRQALLTAKLLLVKGRLETKDNVTHIIAGQMFDYSHMLSEFDIKSRDFH</sequence>
<comment type="function">
    <text evidence="1">DNA polymerase involved in damage-induced mutagenesis and translesion synthesis (TLS). It is not the major replicative DNA polymerase.</text>
</comment>
<comment type="catalytic activity">
    <reaction evidence="1">
        <text>DNA(n) + a 2'-deoxyribonucleoside 5'-triphosphate = DNA(n+1) + diphosphate</text>
        <dbReference type="Rhea" id="RHEA:22508"/>
        <dbReference type="Rhea" id="RHEA-COMP:17339"/>
        <dbReference type="Rhea" id="RHEA-COMP:17340"/>
        <dbReference type="ChEBI" id="CHEBI:33019"/>
        <dbReference type="ChEBI" id="CHEBI:61560"/>
        <dbReference type="ChEBI" id="CHEBI:173112"/>
        <dbReference type="EC" id="2.7.7.7"/>
    </reaction>
</comment>
<comment type="subcellular location">
    <subcellularLocation>
        <location evidence="1">Cytoplasm</location>
    </subcellularLocation>
</comment>
<comment type="similarity">
    <text evidence="1">Belongs to the DNA polymerase type-C family. DnaE2 subfamily.</text>
</comment>
<dbReference type="EC" id="2.7.7.7" evidence="1"/>
<dbReference type="EMBL" id="CP000282">
    <property type="protein sequence ID" value="ABD80290.1"/>
    <property type="molecule type" value="Genomic_DNA"/>
</dbReference>
<dbReference type="RefSeq" id="WP_011467510.1">
    <property type="nucleotide sequence ID" value="NC_007912.1"/>
</dbReference>
<dbReference type="SMR" id="Q21LY9"/>
<dbReference type="STRING" id="203122.Sde_1028"/>
<dbReference type="GeneID" id="98612712"/>
<dbReference type="KEGG" id="sde:Sde_1028"/>
<dbReference type="eggNOG" id="COG0587">
    <property type="taxonomic scope" value="Bacteria"/>
</dbReference>
<dbReference type="HOGENOM" id="CLU_001600_4_0_6"/>
<dbReference type="OrthoDB" id="9803237at2"/>
<dbReference type="Proteomes" id="UP000001947">
    <property type="component" value="Chromosome"/>
</dbReference>
<dbReference type="GO" id="GO:0005737">
    <property type="term" value="C:cytoplasm"/>
    <property type="evidence" value="ECO:0007669"/>
    <property type="project" value="UniProtKB-SubCell"/>
</dbReference>
<dbReference type="GO" id="GO:0008408">
    <property type="term" value="F:3'-5' exonuclease activity"/>
    <property type="evidence" value="ECO:0007669"/>
    <property type="project" value="InterPro"/>
</dbReference>
<dbReference type="GO" id="GO:0003887">
    <property type="term" value="F:DNA-directed DNA polymerase activity"/>
    <property type="evidence" value="ECO:0007669"/>
    <property type="project" value="UniProtKB-UniRule"/>
</dbReference>
<dbReference type="GO" id="GO:0003676">
    <property type="term" value="F:nucleic acid binding"/>
    <property type="evidence" value="ECO:0007669"/>
    <property type="project" value="InterPro"/>
</dbReference>
<dbReference type="GO" id="GO:0006281">
    <property type="term" value="P:DNA repair"/>
    <property type="evidence" value="ECO:0007669"/>
    <property type="project" value="UniProtKB-UniRule"/>
</dbReference>
<dbReference type="GO" id="GO:0006260">
    <property type="term" value="P:DNA replication"/>
    <property type="evidence" value="ECO:0007669"/>
    <property type="project" value="UniProtKB-KW"/>
</dbReference>
<dbReference type="CDD" id="cd04485">
    <property type="entry name" value="DnaE_OBF"/>
    <property type="match status" value="1"/>
</dbReference>
<dbReference type="CDD" id="cd07434">
    <property type="entry name" value="PHP_PolIIIA_DnaE2"/>
    <property type="match status" value="1"/>
</dbReference>
<dbReference type="Gene3D" id="1.10.150.870">
    <property type="match status" value="1"/>
</dbReference>
<dbReference type="Gene3D" id="3.20.20.140">
    <property type="entry name" value="Metal-dependent hydrolases"/>
    <property type="match status" value="1"/>
</dbReference>
<dbReference type="HAMAP" id="MF_01902">
    <property type="entry name" value="DNApol_error_prone"/>
    <property type="match status" value="1"/>
</dbReference>
<dbReference type="InterPro" id="IPR011708">
    <property type="entry name" value="DNA_pol3_alpha_NTPase_dom"/>
</dbReference>
<dbReference type="InterPro" id="IPR040982">
    <property type="entry name" value="DNA_pol3_finger"/>
</dbReference>
<dbReference type="InterPro" id="IPR023073">
    <property type="entry name" value="DnaE2"/>
</dbReference>
<dbReference type="InterPro" id="IPR004805">
    <property type="entry name" value="DnaE2/DnaE/PolC"/>
</dbReference>
<dbReference type="InterPro" id="IPR029460">
    <property type="entry name" value="DNAPol_HHH"/>
</dbReference>
<dbReference type="InterPro" id="IPR004365">
    <property type="entry name" value="NA-bd_OB_tRNA"/>
</dbReference>
<dbReference type="InterPro" id="IPR004013">
    <property type="entry name" value="PHP_dom"/>
</dbReference>
<dbReference type="InterPro" id="IPR003141">
    <property type="entry name" value="Pol/His_phosphatase_N"/>
</dbReference>
<dbReference type="InterPro" id="IPR016195">
    <property type="entry name" value="Pol/histidinol_Pase-like"/>
</dbReference>
<dbReference type="NCBIfam" id="TIGR00594">
    <property type="entry name" value="polc"/>
    <property type="match status" value="1"/>
</dbReference>
<dbReference type="NCBIfam" id="NF004225">
    <property type="entry name" value="PRK05672.1"/>
    <property type="match status" value="1"/>
</dbReference>
<dbReference type="PANTHER" id="PTHR32294">
    <property type="entry name" value="DNA POLYMERASE III SUBUNIT ALPHA"/>
    <property type="match status" value="1"/>
</dbReference>
<dbReference type="PANTHER" id="PTHR32294:SF4">
    <property type="entry name" value="ERROR-PRONE DNA POLYMERASE"/>
    <property type="match status" value="1"/>
</dbReference>
<dbReference type="Pfam" id="PF07733">
    <property type="entry name" value="DNA_pol3_alpha"/>
    <property type="match status" value="1"/>
</dbReference>
<dbReference type="Pfam" id="PF17657">
    <property type="entry name" value="DNA_pol3_finger"/>
    <property type="match status" value="1"/>
</dbReference>
<dbReference type="Pfam" id="PF14579">
    <property type="entry name" value="HHH_6"/>
    <property type="match status" value="1"/>
</dbReference>
<dbReference type="Pfam" id="PF02811">
    <property type="entry name" value="PHP"/>
    <property type="match status" value="1"/>
</dbReference>
<dbReference type="Pfam" id="PF01336">
    <property type="entry name" value="tRNA_anti-codon"/>
    <property type="match status" value="1"/>
</dbReference>
<dbReference type="SMART" id="SM00481">
    <property type="entry name" value="POLIIIAc"/>
    <property type="match status" value="1"/>
</dbReference>
<dbReference type="SUPFAM" id="SSF89550">
    <property type="entry name" value="PHP domain-like"/>
    <property type="match status" value="1"/>
</dbReference>
<organism>
    <name type="scientific">Saccharophagus degradans (strain 2-40 / ATCC 43961 / DSM 17024)</name>
    <dbReference type="NCBI Taxonomy" id="203122"/>
    <lineage>
        <taxon>Bacteria</taxon>
        <taxon>Pseudomonadati</taxon>
        <taxon>Pseudomonadota</taxon>
        <taxon>Gammaproteobacteria</taxon>
        <taxon>Cellvibrionales</taxon>
        <taxon>Cellvibrionaceae</taxon>
        <taxon>Saccharophagus</taxon>
    </lineage>
</organism>
<evidence type="ECO:0000255" key="1">
    <source>
        <dbReference type="HAMAP-Rule" id="MF_01902"/>
    </source>
</evidence>
<name>DNAE2_SACD2</name>
<gene>
    <name evidence="1" type="primary">dnaE2</name>
    <name type="ordered locus">Sde_1028</name>
</gene>
<accession>Q21LY9</accession>
<reference key="1">
    <citation type="journal article" date="2008" name="PLoS Genet.">
        <title>Complete genome sequence of the complex carbohydrate-degrading marine bacterium, Saccharophagus degradans strain 2-40 T.</title>
        <authorList>
            <person name="Weiner R.M."/>
            <person name="Taylor L.E. II"/>
            <person name="Henrissat B."/>
            <person name="Hauser L."/>
            <person name="Land M."/>
            <person name="Coutinho P.M."/>
            <person name="Rancurel C."/>
            <person name="Saunders E.H."/>
            <person name="Longmire A.G."/>
            <person name="Zhang H."/>
            <person name="Bayer E.A."/>
            <person name="Gilbert H.J."/>
            <person name="Larimer F."/>
            <person name="Zhulin I.B."/>
            <person name="Ekborg N.A."/>
            <person name="Lamed R."/>
            <person name="Richardson P.M."/>
            <person name="Borovok I."/>
            <person name="Hutcheson S."/>
        </authorList>
    </citation>
    <scope>NUCLEOTIDE SEQUENCE [LARGE SCALE GENOMIC DNA]</scope>
    <source>
        <strain>2-40 / ATCC 43961 / DSM 17024</strain>
    </source>
</reference>
<proteinExistence type="inferred from homology"/>
<feature type="chain" id="PRO_1000073691" description="Error-prone DNA polymerase">
    <location>
        <begin position="1"/>
        <end position="1029"/>
    </location>
</feature>